<organism>
    <name type="scientific">Streptococcus pneumoniae (strain ATCC BAA-255 / R6)</name>
    <dbReference type="NCBI Taxonomy" id="171101"/>
    <lineage>
        <taxon>Bacteria</taxon>
        <taxon>Bacillati</taxon>
        <taxon>Bacillota</taxon>
        <taxon>Bacilli</taxon>
        <taxon>Lactobacillales</taxon>
        <taxon>Streptococcaceae</taxon>
        <taxon>Streptococcus</taxon>
    </lineage>
</organism>
<comment type="function">
    <text evidence="2">Part of the ABC transporter complex PstSACB involved in phosphate import.</text>
</comment>
<comment type="subunit">
    <text evidence="3">The complex is composed of two ATP-binding proteins (PstB), two transmembrane proteins (PstC and PstA) and a solute-binding protein (PstS).</text>
</comment>
<comment type="subcellular location">
    <subcellularLocation>
        <location evidence="3">Cell membrane</location>
        <topology evidence="3">Lipid-anchor</topology>
    </subcellularLocation>
</comment>
<comment type="similarity">
    <text evidence="3">Belongs to the PstS family.</text>
</comment>
<comment type="sequence caution" evidence="3">
    <conflict type="erroneous initiation">
        <sequence resource="EMBL-CDS" id="AAL00697"/>
    </conflict>
</comment>
<reference key="1">
    <citation type="journal article" date="1999" name="J. Bacteriol.">
        <title>Identification of a Streptococcus pneumoniae gene locus encoding proteins of an ABC phosphate transporter and a two-component regulatory system.</title>
        <authorList>
            <person name="Novak R."/>
            <person name="Cauwels A."/>
            <person name="Charpentier E."/>
            <person name="Tuomanen E."/>
        </authorList>
    </citation>
    <scope>NUCLEOTIDE SEQUENCE [GENOMIC DNA]</scope>
    <scope>FUNCTION</scope>
</reference>
<reference key="2">
    <citation type="journal article" date="2001" name="J. Bacteriol.">
        <title>Genome of the bacterium Streptococcus pneumoniae strain R6.</title>
        <authorList>
            <person name="Hoskins J."/>
            <person name="Alborn W.E. Jr."/>
            <person name="Arnold J."/>
            <person name="Blaszczak L.C."/>
            <person name="Burgett S."/>
            <person name="DeHoff B.S."/>
            <person name="Estrem S.T."/>
            <person name="Fritz L."/>
            <person name="Fu D.-J."/>
            <person name="Fuller W."/>
            <person name="Geringer C."/>
            <person name="Gilmour R."/>
            <person name="Glass J.S."/>
            <person name="Khoja H."/>
            <person name="Kraft A.R."/>
            <person name="Lagace R.E."/>
            <person name="LeBlanc D.J."/>
            <person name="Lee L.N."/>
            <person name="Lefkowitz E.J."/>
            <person name="Lu J."/>
            <person name="Matsushima P."/>
            <person name="McAhren S.M."/>
            <person name="McHenney M."/>
            <person name="McLeaster K."/>
            <person name="Mundy C.W."/>
            <person name="Nicas T.I."/>
            <person name="Norris F.H."/>
            <person name="O'Gara M."/>
            <person name="Peery R.B."/>
            <person name="Robertson G.T."/>
            <person name="Rockey P."/>
            <person name="Sun P.-M."/>
            <person name="Winkler M.E."/>
            <person name="Yang Y."/>
            <person name="Young-Bellido M."/>
            <person name="Zhao G."/>
            <person name="Zook C.A."/>
            <person name="Baltz R.H."/>
            <person name="Jaskunas S.R."/>
            <person name="Rosteck P.R. Jr."/>
            <person name="Skatrud P.L."/>
            <person name="Glass J.I."/>
        </authorList>
    </citation>
    <scope>NUCLEOTIDE SEQUENCE [LARGE SCALE GENOMIC DNA]</scope>
    <source>
        <strain>ATCC BAA-255 / R6</strain>
    </source>
</reference>
<sequence length="291" mass="30757">MKFKKMLTLAAIGLSGFGLVACGNQSAASKQSASGTIEVISRENGSGTRGAFTEITGILKKDGDKKIDNTAKTAVIQNSTEGVLSAVQGNANAIGYISLGSLTKSVKALEIDGVKASRDTVLDGEYPLQRPFNIVWSSNLSKLGQDFISFIHSKQGQQVVTDNKFIEAKTETTEYTSQHLSGKLSVVGSTSVSSLMEKLAEAYKKENPEVTIDITSNGSSAGITAVKEKTADIGMVSRELTPEEGKSLTHDAIALDGIAVVVNNDNKASQVSMAELADVFSGKLTTWDKIK</sequence>
<keyword id="KW-1003">Cell membrane</keyword>
<keyword id="KW-0449">Lipoprotein</keyword>
<keyword id="KW-0472">Membrane</keyword>
<keyword id="KW-0564">Palmitate</keyword>
<keyword id="KW-0592">Phosphate transport</keyword>
<keyword id="KW-1185">Reference proteome</keyword>
<keyword id="KW-0732">Signal</keyword>
<keyword id="KW-0813">Transport</keyword>
<protein>
    <recommendedName>
        <fullName>Phosphate-binding protein PstS 2</fullName>
        <shortName>PBP 2</shortName>
    </recommendedName>
</protein>
<evidence type="ECO:0000255" key="1">
    <source>
        <dbReference type="PROSITE-ProRule" id="PRU00303"/>
    </source>
</evidence>
<evidence type="ECO:0000269" key="2">
    <source>
    </source>
</evidence>
<evidence type="ECO:0000305" key="3"/>
<dbReference type="EMBL" id="AF118229">
    <property type="protein sequence ID" value="AAD22038.1"/>
    <property type="molecule type" value="Genomic_DNA"/>
</dbReference>
<dbReference type="EMBL" id="AE007317">
    <property type="protein sequence ID" value="AAL00697.1"/>
    <property type="status" value="ALT_INIT"/>
    <property type="molecule type" value="Genomic_DNA"/>
</dbReference>
<dbReference type="PIR" id="D98108">
    <property type="entry name" value="D98108"/>
</dbReference>
<dbReference type="RefSeq" id="NP_359486.1">
    <property type="nucleotide sequence ID" value="NC_003098.1"/>
</dbReference>
<dbReference type="RefSeq" id="WP_000669493.1">
    <property type="nucleotide sequence ID" value="NC_003098.1"/>
</dbReference>
<dbReference type="SMR" id="Q8DN64"/>
<dbReference type="STRING" id="171101.spr1895"/>
<dbReference type="KEGG" id="spr:spr1895"/>
<dbReference type="PATRIC" id="fig|171101.6.peg.2044"/>
<dbReference type="eggNOG" id="COG0226">
    <property type="taxonomic scope" value="Bacteria"/>
</dbReference>
<dbReference type="HOGENOM" id="CLU_073531_0_0_9"/>
<dbReference type="Proteomes" id="UP000000586">
    <property type="component" value="Chromosome"/>
</dbReference>
<dbReference type="GO" id="GO:0005886">
    <property type="term" value="C:plasma membrane"/>
    <property type="evidence" value="ECO:0007669"/>
    <property type="project" value="UniProtKB-SubCell"/>
</dbReference>
<dbReference type="GO" id="GO:0006817">
    <property type="term" value="P:phosphate ion transport"/>
    <property type="evidence" value="ECO:0007669"/>
    <property type="project" value="UniProtKB-KW"/>
</dbReference>
<dbReference type="FunFam" id="3.40.190.10:FF:000184">
    <property type="entry name" value="Phosphate ABC transporter, phosphate-binding protein"/>
    <property type="match status" value="1"/>
</dbReference>
<dbReference type="FunFam" id="3.40.190.10:FF:000229">
    <property type="entry name" value="Phosphate ABC transporter, phosphate-binding protein"/>
    <property type="match status" value="1"/>
</dbReference>
<dbReference type="Gene3D" id="3.40.190.10">
    <property type="entry name" value="Periplasmic binding protein-like II"/>
    <property type="match status" value="2"/>
</dbReference>
<dbReference type="InterPro" id="IPR024370">
    <property type="entry name" value="PBP_domain"/>
</dbReference>
<dbReference type="InterPro" id="IPR050811">
    <property type="entry name" value="Phosphate_ABC_transporter"/>
</dbReference>
<dbReference type="PANTHER" id="PTHR30570">
    <property type="entry name" value="PERIPLASMIC PHOSPHATE BINDING COMPONENT OF PHOSPHATE ABC TRANSPORTER"/>
    <property type="match status" value="1"/>
</dbReference>
<dbReference type="PANTHER" id="PTHR30570:SF1">
    <property type="entry name" value="PHOSPHATE-BINDING PROTEIN PSTS"/>
    <property type="match status" value="1"/>
</dbReference>
<dbReference type="Pfam" id="PF12849">
    <property type="entry name" value="PBP_like_2"/>
    <property type="match status" value="2"/>
</dbReference>
<dbReference type="SUPFAM" id="SSF53850">
    <property type="entry name" value="Periplasmic binding protein-like II"/>
    <property type="match status" value="2"/>
</dbReference>
<dbReference type="PROSITE" id="PS51257">
    <property type="entry name" value="PROKAR_LIPOPROTEIN"/>
    <property type="match status" value="1"/>
</dbReference>
<gene>
    <name type="primary">pstS2</name>
    <name type="ordered locus">spr1895</name>
</gene>
<name>PSTS2_STRR6</name>
<accession>Q8DN64</accession>
<accession>Q7D480</accession>
<accession>Q9X4T0</accession>
<feature type="signal peptide" evidence="1">
    <location>
        <begin position="1"/>
        <end position="21"/>
    </location>
</feature>
<feature type="chain" id="PRO_0000281673" description="Phosphate-binding protein PstS 2">
    <location>
        <begin position="22"/>
        <end position="291"/>
    </location>
</feature>
<feature type="lipid moiety-binding region" description="N-palmitoyl cysteine" evidence="1">
    <location>
        <position position="22"/>
    </location>
</feature>
<feature type="lipid moiety-binding region" description="S-diacylglycerol cysteine" evidence="1">
    <location>
        <position position="22"/>
    </location>
</feature>
<proteinExistence type="inferred from homology"/>